<reference key="1">
    <citation type="journal article" date="2005" name="Nat. Biotechnol.">
        <title>Complete genome sequence of the acetic acid bacterium Gluconobacter oxydans.</title>
        <authorList>
            <person name="Prust C."/>
            <person name="Hoffmeister M."/>
            <person name="Liesegang H."/>
            <person name="Wiezer A."/>
            <person name="Fricke W.F."/>
            <person name="Ehrenreich A."/>
            <person name="Gottschalk G."/>
            <person name="Deppenmeier U."/>
        </authorList>
    </citation>
    <scope>NUCLEOTIDE SEQUENCE [LARGE SCALE GENOMIC DNA]</scope>
    <source>
        <strain>621H</strain>
    </source>
</reference>
<name>NRDR_GLUOX</name>
<gene>
    <name evidence="1" type="primary">nrdR</name>
    <name type="ordered locus">GOX2414</name>
</gene>
<organism>
    <name type="scientific">Gluconobacter oxydans (strain 621H)</name>
    <name type="common">Gluconobacter suboxydans</name>
    <dbReference type="NCBI Taxonomy" id="290633"/>
    <lineage>
        <taxon>Bacteria</taxon>
        <taxon>Pseudomonadati</taxon>
        <taxon>Pseudomonadota</taxon>
        <taxon>Alphaproteobacteria</taxon>
        <taxon>Acetobacterales</taxon>
        <taxon>Acetobacteraceae</taxon>
        <taxon>Gluconobacter</taxon>
    </lineage>
</organism>
<dbReference type="EMBL" id="CP000009">
    <property type="protein sequence ID" value="AAW62145.1"/>
    <property type="molecule type" value="Genomic_DNA"/>
</dbReference>
<dbReference type="RefSeq" id="WP_011253914.1">
    <property type="nucleotide sequence ID" value="NZ_LT900338.1"/>
</dbReference>
<dbReference type="SMR" id="Q5FNA2"/>
<dbReference type="STRING" id="290633.GOX2414"/>
<dbReference type="GeneID" id="56906739"/>
<dbReference type="KEGG" id="gox:GOX2414"/>
<dbReference type="eggNOG" id="COG1327">
    <property type="taxonomic scope" value="Bacteria"/>
</dbReference>
<dbReference type="HOGENOM" id="CLU_108412_0_1_5"/>
<dbReference type="Proteomes" id="UP000006375">
    <property type="component" value="Chromosome"/>
</dbReference>
<dbReference type="GO" id="GO:0005524">
    <property type="term" value="F:ATP binding"/>
    <property type="evidence" value="ECO:0007669"/>
    <property type="project" value="UniProtKB-KW"/>
</dbReference>
<dbReference type="GO" id="GO:0003677">
    <property type="term" value="F:DNA binding"/>
    <property type="evidence" value="ECO:0007669"/>
    <property type="project" value="UniProtKB-KW"/>
</dbReference>
<dbReference type="GO" id="GO:0008270">
    <property type="term" value="F:zinc ion binding"/>
    <property type="evidence" value="ECO:0007669"/>
    <property type="project" value="UniProtKB-UniRule"/>
</dbReference>
<dbReference type="GO" id="GO:0045892">
    <property type="term" value="P:negative regulation of DNA-templated transcription"/>
    <property type="evidence" value="ECO:0007669"/>
    <property type="project" value="UniProtKB-UniRule"/>
</dbReference>
<dbReference type="HAMAP" id="MF_00440">
    <property type="entry name" value="NrdR"/>
    <property type="match status" value="1"/>
</dbReference>
<dbReference type="InterPro" id="IPR005144">
    <property type="entry name" value="ATP-cone_dom"/>
</dbReference>
<dbReference type="InterPro" id="IPR055173">
    <property type="entry name" value="NrdR-like_N"/>
</dbReference>
<dbReference type="InterPro" id="IPR003796">
    <property type="entry name" value="RNR_NrdR-like"/>
</dbReference>
<dbReference type="NCBIfam" id="TIGR00244">
    <property type="entry name" value="transcriptional regulator NrdR"/>
    <property type="match status" value="1"/>
</dbReference>
<dbReference type="PANTHER" id="PTHR30455">
    <property type="entry name" value="TRANSCRIPTIONAL REPRESSOR NRDR"/>
    <property type="match status" value="1"/>
</dbReference>
<dbReference type="PANTHER" id="PTHR30455:SF2">
    <property type="entry name" value="TRANSCRIPTIONAL REPRESSOR NRDR"/>
    <property type="match status" value="1"/>
</dbReference>
<dbReference type="Pfam" id="PF03477">
    <property type="entry name" value="ATP-cone"/>
    <property type="match status" value="1"/>
</dbReference>
<dbReference type="Pfam" id="PF22811">
    <property type="entry name" value="Zn_ribbon_NrdR"/>
    <property type="match status" value="1"/>
</dbReference>
<dbReference type="PROSITE" id="PS51161">
    <property type="entry name" value="ATP_CONE"/>
    <property type="match status" value="1"/>
</dbReference>
<proteinExistence type="inferred from homology"/>
<comment type="function">
    <text evidence="1">Negatively regulates transcription of bacterial ribonucleotide reductase nrd genes and operons by binding to NrdR-boxes.</text>
</comment>
<comment type="cofactor">
    <cofactor evidence="1">
        <name>Zn(2+)</name>
        <dbReference type="ChEBI" id="CHEBI:29105"/>
    </cofactor>
    <text evidence="1">Binds 1 zinc ion.</text>
</comment>
<comment type="similarity">
    <text evidence="1">Belongs to the NrdR family.</text>
</comment>
<sequence length="166" mass="18957">MRCPFCGHDDTQVKDSRSTEDGVAIRRRRVCSACTQRFTTVERVQLRELSVTKADGRRVPFDRDKLARSIRVALRKRPVPEERQERLVNGLVRQLEASGEHEISSHRIGQLAMDALREVDGVAYVRFTSVYRDFREVEAFSKILADMKPIPGETDTPSPDDSQETP</sequence>
<protein>
    <recommendedName>
        <fullName evidence="1">Transcriptional repressor NrdR</fullName>
    </recommendedName>
</protein>
<feature type="chain" id="PRO_0000230871" description="Transcriptional repressor NrdR">
    <location>
        <begin position="1"/>
        <end position="166"/>
    </location>
</feature>
<feature type="domain" description="ATP-cone" evidence="1">
    <location>
        <begin position="49"/>
        <end position="139"/>
    </location>
</feature>
<feature type="zinc finger region" evidence="1">
    <location>
        <begin position="3"/>
        <end position="34"/>
    </location>
</feature>
<feature type="region of interest" description="Disordered" evidence="2">
    <location>
        <begin position="146"/>
        <end position="166"/>
    </location>
</feature>
<evidence type="ECO:0000255" key="1">
    <source>
        <dbReference type="HAMAP-Rule" id="MF_00440"/>
    </source>
</evidence>
<evidence type="ECO:0000256" key="2">
    <source>
        <dbReference type="SAM" id="MobiDB-lite"/>
    </source>
</evidence>
<accession>Q5FNA2</accession>
<keyword id="KW-0067">ATP-binding</keyword>
<keyword id="KW-0238">DNA-binding</keyword>
<keyword id="KW-0479">Metal-binding</keyword>
<keyword id="KW-0547">Nucleotide-binding</keyword>
<keyword id="KW-1185">Reference proteome</keyword>
<keyword id="KW-0678">Repressor</keyword>
<keyword id="KW-0804">Transcription</keyword>
<keyword id="KW-0805">Transcription regulation</keyword>
<keyword id="KW-0862">Zinc</keyword>
<keyword id="KW-0863">Zinc-finger</keyword>